<accession>O82794</accession>
<sequence length="220" mass="25064">MAREKIRIKKIDNITARQVTFSKRRRGIFKKADELSVLCDADVALIIFSATGKLFEFSSSRMRDILGRYSLHASNINKLMDPPSTHLRLENCNLSRLSKEVEDKTKQLRKLRGEDLDGLNLEELQRLEKLLESGLSRVSEKKGECVMSQIFSLEKRGSELVDENKRLRDKLETLERAKLTTLKEALETESVTTNVSSYDSGTPLEDDSDTSLKLGLPSWE</sequence>
<reference key="1">
    <citation type="submission" date="1997-05" db="EMBL/GenBank/DDBJ databases">
        <title>The Product of AGAMOUS Interacts with Select Members of the MADS-Box Family of Proteins in Arabidopsis thaliana.</title>
        <authorList>
            <person name="Kohalmi S.E."/>
            <person name="Schorr P."/>
            <person name="Nowak J."/>
            <person name="Reader L.J."/>
            <person name="Crosby W.L."/>
        </authorList>
    </citation>
    <scope>NUCLEOTIDE SEQUENCE [GENOMIC DNA / MRNA]</scope>
</reference>
<reference key="2">
    <citation type="journal article" date="1999" name="Nature">
        <title>Sequence and analysis of chromosome 4 of the plant Arabidopsis thaliana.</title>
        <authorList>
            <person name="Mayer K.F.X."/>
            <person name="Schueller C."/>
            <person name="Wambutt R."/>
            <person name="Murphy G."/>
            <person name="Volckaert G."/>
            <person name="Pohl T."/>
            <person name="Duesterhoeft A."/>
            <person name="Stiekema W."/>
            <person name="Entian K.-D."/>
            <person name="Terryn N."/>
            <person name="Harris B."/>
            <person name="Ansorge W."/>
            <person name="Brandt P."/>
            <person name="Grivell L.A."/>
            <person name="Rieger M."/>
            <person name="Weichselgartner M."/>
            <person name="de Simone V."/>
            <person name="Obermaier B."/>
            <person name="Mache R."/>
            <person name="Mueller M."/>
            <person name="Kreis M."/>
            <person name="Delseny M."/>
            <person name="Puigdomenech P."/>
            <person name="Watson M."/>
            <person name="Schmidtheini T."/>
            <person name="Reichert B."/>
            <person name="Portetelle D."/>
            <person name="Perez-Alonso M."/>
            <person name="Boutry M."/>
            <person name="Bancroft I."/>
            <person name="Vos P."/>
            <person name="Hoheisel J."/>
            <person name="Zimmermann W."/>
            <person name="Wedler H."/>
            <person name="Ridley P."/>
            <person name="Langham S.-A."/>
            <person name="McCullagh B."/>
            <person name="Bilham L."/>
            <person name="Robben J."/>
            <person name="van der Schueren J."/>
            <person name="Grymonprez B."/>
            <person name="Chuang Y.-J."/>
            <person name="Vandenbussche F."/>
            <person name="Braeken M."/>
            <person name="Weltjens I."/>
            <person name="Voet M."/>
            <person name="Bastiaens I."/>
            <person name="Aert R."/>
            <person name="Defoor E."/>
            <person name="Weitzenegger T."/>
            <person name="Bothe G."/>
            <person name="Ramsperger U."/>
            <person name="Hilbert H."/>
            <person name="Braun M."/>
            <person name="Holzer E."/>
            <person name="Brandt A."/>
            <person name="Peters S."/>
            <person name="van Staveren M."/>
            <person name="Dirkse W."/>
            <person name="Mooijman P."/>
            <person name="Klein Lankhorst R."/>
            <person name="Rose M."/>
            <person name="Hauf J."/>
            <person name="Koetter P."/>
            <person name="Berneiser S."/>
            <person name="Hempel S."/>
            <person name="Feldpausch M."/>
            <person name="Lamberth S."/>
            <person name="Van den Daele H."/>
            <person name="De Keyser A."/>
            <person name="Buysshaert C."/>
            <person name="Gielen J."/>
            <person name="Villarroel R."/>
            <person name="De Clercq R."/>
            <person name="van Montagu M."/>
            <person name="Rogers J."/>
            <person name="Cronin A."/>
            <person name="Quail M.A."/>
            <person name="Bray-Allen S."/>
            <person name="Clark L."/>
            <person name="Doggett J."/>
            <person name="Hall S."/>
            <person name="Kay M."/>
            <person name="Lennard N."/>
            <person name="McLay K."/>
            <person name="Mayes R."/>
            <person name="Pettett A."/>
            <person name="Rajandream M.A."/>
            <person name="Lyne M."/>
            <person name="Benes V."/>
            <person name="Rechmann S."/>
            <person name="Borkova D."/>
            <person name="Bloecker H."/>
            <person name="Scharfe M."/>
            <person name="Grimm M."/>
            <person name="Loehnert T.-H."/>
            <person name="Dose S."/>
            <person name="de Haan M."/>
            <person name="Maarse A.C."/>
            <person name="Schaefer M."/>
            <person name="Mueller-Auer S."/>
            <person name="Gabel C."/>
            <person name="Fuchs M."/>
            <person name="Fartmann B."/>
            <person name="Granderath K."/>
            <person name="Dauner D."/>
            <person name="Herzl A."/>
            <person name="Neumann S."/>
            <person name="Argiriou A."/>
            <person name="Vitale D."/>
            <person name="Liguori R."/>
            <person name="Piravandi E."/>
            <person name="Massenet O."/>
            <person name="Quigley F."/>
            <person name="Clabauld G."/>
            <person name="Muendlein A."/>
            <person name="Felber R."/>
            <person name="Schnabl S."/>
            <person name="Hiller R."/>
            <person name="Schmidt W."/>
            <person name="Lecharny A."/>
            <person name="Aubourg S."/>
            <person name="Chefdor F."/>
            <person name="Cooke R."/>
            <person name="Berger C."/>
            <person name="Monfort A."/>
            <person name="Casacuberta E."/>
            <person name="Gibbons T."/>
            <person name="Weber N."/>
            <person name="Vandenbol M."/>
            <person name="Bargues M."/>
            <person name="Terol J."/>
            <person name="Torres A."/>
            <person name="Perez-Perez A."/>
            <person name="Purnelle B."/>
            <person name="Bent E."/>
            <person name="Johnson S."/>
            <person name="Tacon D."/>
            <person name="Jesse T."/>
            <person name="Heijnen L."/>
            <person name="Schwarz S."/>
            <person name="Scholler P."/>
            <person name="Heber S."/>
            <person name="Francs P."/>
            <person name="Bielke C."/>
            <person name="Frishman D."/>
            <person name="Haase D."/>
            <person name="Lemcke K."/>
            <person name="Mewes H.-W."/>
            <person name="Stocker S."/>
            <person name="Zaccaria P."/>
            <person name="Bevan M."/>
            <person name="Wilson R.K."/>
            <person name="de la Bastide M."/>
            <person name="Habermann K."/>
            <person name="Parnell L."/>
            <person name="Dedhia N."/>
            <person name="Gnoj L."/>
            <person name="Schutz K."/>
            <person name="Huang E."/>
            <person name="Spiegel L."/>
            <person name="Sekhon M."/>
            <person name="Murray J."/>
            <person name="Sheet P."/>
            <person name="Cordes M."/>
            <person name="Abu-Threideh J."/>
            <person name="Stoneking T."/>
            <person name="Kalicki J."/>
            <person name="Graves T."/>
            <person name="Harmon G."/>
            <person name="Edwards J."/>
            <person name="Latreille P."/>
            <person name="Courtney L."/>
            <person name="Cloud J."/>
            <person name="Abbott A."/>
            <person name="Scott K."/>
            <person name="Johnson D."/>
            <person name="Minx P."/>
            <person name="Bentley D."/>
            <person name="Fulton B."/>
            <person name="Miller N."/>
            <person name="Greco T."/>
            <person name="Kemp K."/>
            <person name="Kramer J."/>
            <person name="Fulton L."/>
            <person name="Mardis E."/>
            <person name="Dante M."/>
            <person name="Pepin K."/>
            <person name="Hillier L.W."/>
            <person name="Nelson J."/>
            <person name="Spieth J."/>
            <person name="Ryan E."/>
            <person name="Andrews S."/>
            <person name="Geisel C."/>
            <person name="Layman D."/>
            <person name="Du H."/>
            <person name="Ali J."/>
            <person name="Berghoff A."/>
            <person name="Jones K."/>
            <person name="Drone K."/>
            <person name="Cotton M."/>
            <person name="Joshu C."/>
            <person name="Antonoiu B."/>
            <person name="Zidanic M."/>
            <person name="Strong C."/>
            <person name="Sun H."/>
            <person name="Lamar B."/>
            <person name="Yordan C."/>
            <person name="Ma P."/>
            <person name="Zhong J."/>
            <person name="Preston R."/>
            <person name="Vil D."/>
            <person name="Shekher M."/>
            <person name="Matero A."/>
            <person name="Shah R."/>
            <person name="Swaby I.K."/>
            <person name="O'Shaughnessy A."/>
            <person name="Rodriguez M."/>
            <person name="Hoffman J."/>
            <person name="Till S."/>
            <person name="Granat S."/>
            <person name="Shohdy N."/>
            <person name="Hasegawa A."/>
            <person name="Hameed A."/>
            <person name="Lodhi M."/>
            <person name="Johnson A."/>
            <person name="Chen E."/>
            <person name="Marra M.A."/>
            <person name="Martienssen R."/>
            <person name="McCombie W.R."/>
        </authorList>
    </citation>
    <scope>NUCLEOTIDE SEQUENCE [LARGE SCALE GENOMIC DNA]</scope>
    <source>
        <strain>cv. Columbia</strain>
    </source>
</reference>
<reference key="3">
    <citation type="journal article" date="2017" name="Plant J.">
        <title>Araport11: a complete reannotation of the Arabidopsis thaliana reference genome.</title>
        <authorList>
            <person name="Cheng C.Y."/>
            <person name="Krishnakumar V."/>
            <person name="Chan A.P."/>
            <person name="Thibaud-Nissen F."/>
            <person name="Schobel S."/>
            <person name="Town C.D."/>
        </authorList>
    </citation>
    <scope>GENOME REANNOTATION</scope>
    <source>
        <strain>cv. Columbia</strain>
    </source>
</reference>
<reference key="4">
    <citation type="submission" date="2006-04" db="EMBL/GenBank/DDBJ databases">
        <title>Arabidopsis ORF clones.</title>
        <authorList>
            <person name="Shinn P."/>
            <person name="Chen H."/>
            <person name="Kim C.J."/>
            <person name="Ecker J.R."/>
        </authorList>
    </citation>
    <scope>NUCLEOTIDE SEQUENCE [LARGE SCALE MRNA]</scope>
    <source>
        <strain>cv. Columbia</strain>
    </source>
</reference>
<reference key="5">
    <citation type="submission" date="2009-03" db="EMBL/GenBank/DDBJ databases">
        <title>ORF cloning and analysis of Arabidopsis transcription factor genes.</title>
        <authorList>
            <person name="Fujita M."/>
            <person name="Mizukado S."/>
            <person name="Seki M."/>
            <person name="Shinozaki K."/>
            <person name="Mitsuda N."/>
            <person name="Takiguchi Y."/>
            <person name="Takagi M."/>
        </authorList>
    </citation>
    <scope>NUCLEOTIDE SEQUENCE [LARGE SCALE MRNA]</scope>
</reference>
<reference key="6">
    <citation type="journal article" date="2002" name="Proc. Natl. Acad. Sci. U.S.A.">
        <title>AGAMOUS-LIKE 24, a dosage-dependent mediator of the flowering signals.</title>
        <authorList>
            <person name="Yu H."/>
            <person name="Xu Y."/>
            <person name="Tan E.L."/>
            <person name="Kumar P.P."/>
        </authorList>
    </citation>
    <scope>FUNCTION</scope>
    <scope>DISRUPTION PHENOTYPE</scope>
    <scope>TISSUE SPECIFICITY</scope>
    <scope>DEVELOPMENTAL STAGE</scope>
</reference>
<reference key="7">
    <citation type="journal article" date="2003" name="Plant Cell Physiol.">
        <title>An Arabidopsis MADS-box protein, AGL24, is specifically bound to and phosphorylated by meristematic receptor-like kinase (MRLK).</title>
        <authorList>
            <person name="Fujita H."/>
            <person name="Takemura M."/>
            <person name="Tani E."/>
            <person name="Nemoto K."/>
            <person name="Yokota A."/>
            <person name="Kohchi T."/>
        </authorList>
    </citation>
    <scope>FUNCTION</scope>
    <scope>SUBCELLULAR LOCATION</scope>
    <scope>TISSUE SPECIFICITY</scope>
    <scope>INTERACTION WITH IMK3</scope>
    <scope>PHOSPHORYLATION BY IMK3</scope>
</reference>
<reference key="8">
    <citation type="journal article" date="2003" name="Plant J.">
        <title>AGL24 acts as a promoter of flowering in Arabidopsis and is positively regulated by vernalization.</title>
        <authorList>
            <person name="Michaels S.D."/>
            <person name="Ditta G."/>
            <person name="Gustafson-Brown C."/>
            <person name="Pelaz S."/>
            <person name="Yanofsky M."/>
            <person name="Amasino R.M."/>
        </authorList>
    </citation>
    <scope>FUNCTION</scope>
    <scope>TISSUE SPECIFICITY</scope>
    <scope>INDUCTION BY VERNALIZATION</scope>
</reference>
<reference key="9">
    <citation type="journal article" date="2004" name="Nat. Genet.">
        <title>Repression of AGAMOUS-LIKE 24 is a crucial step in promoting flower development.</title>
        <authorList>
            <person name="Yu H."/>
            <person name="Ito T."/>
            <person name="Wellmer F."/>
            <person name="Meyerowitz E.M."/>
        </authorList>
    </citation>
    <scope>FUNCTION</scope>
    <scope>DEVELOPMENTAL STAGE</scope>
    <scope>INDUCTION BY AP1 AND LFY</scope>
</reference>
<reference key="10">
    <citation type="journal article" date="2005" name="Plant Cell">
        <title>Comprehensive interaction map of the Arabidopsis MADS Box transcription factors.</title>
        <authorList>
            <person name="de Folter S."/>
            <person name="Immink R.G.H."/>
            <person name="Kieffer M."/>
            <person name="Parenicova L."/>
            <person name="Henz S.R."/>
            <person name="Weigel D."/>
            <person name="Busscher M."/>
            <person name="Kooiker M."/>
            <person name="Colombo L."/>
            <person name="Kater M.M."/>
            <person name="Davies B."/>
            <person name="Angenent G.C."/>
        </authorList>
    </citation>
    <scope>INTERACTION WITH AGL15 AND AGL16</scope>
</reference>
<reference key="11">
    <citation type="journal article" date="2006" name="Plant Cell">
        <title>AGL24, SHORT VEGETATIVE PHASE, and APETALA1 redundantly control AGAMOUS during early stages of flower development in Arabidopsis.</title>
        <authorList>
            <person name="Gregis V."/>
            <person name="Sessa A."/>
            <person name="Colombo L."/>
            <person name="Kater M.M."/>
        </authorList>
    </citation>
    <scope>FUNCTION</scope>
    <scope>INTERACTION WITH AP1; SEU AND LUG</scope>
</reference>
<reference key="12">
    <citation type="journal article" date="2007" name="Development">
        <title>Specification of Arabidopsis floral meristem identity by repression of flowering time genes.</title>
        <authorList>
            <person name="Liu C."/>
            <person name="Zhou J."/>
            <person name="Bracha-Drori K."/>
            <person name="Yalovsky S."/>
            <person name="Ito T."/>
            <person name="Yu H."/>
        </authorList>
    </citation>
    <scope>INDUCTION BY AP1</scope>
</reference>
<reference key="13">
    <citation type="journal article" date="2008" name="Development">
        <title>Direct interaction of AGL24 and SOC1 integrates flowering signals in Arabidopsis.</title>
        <authorList>
            <person name="Liu C."/>
            <person name="Chen H."/>
            <person name="Er H.L."/>
            <person name="Soo H.M."/>
            <person name="Kumar P.P."/>
            <person name="Han J.-H."/>
            <person name="Liou Y.C."/>
            <person name="Yu H."/>
        </authorList>
    </citation>
    <scope>FUNCTION</scope>
    <scope>INDUCTION BY SOC1</scope>
</reference>
<reference key="14">
    <citation type="journal article" date="2008" name="J. Exp. Bot.">
        <title>FLC or not FLC: the other side of vernalization.</title>
        <authorList>
            <person name="Alexandre C.M."/>
            <person name="Hennig L."/>
        </authorList>
    </citation>
    <scope>REVIEW</scope>
</reference>
<reference key="15">
    <citation type="journal article" date="2008" name="Plant J.">
        <title>SOC1 translocated to the nucleus by interaction with AGL24 directly regulates leafy.</title>
        <authorList>
            <person name="Lee J."/>
            <person name="Oh M."/>
            <person name="Park H."/>
            <person name="Lee I."/>
        </authorList>
    </citation>
    <scope>FUNCTION</scope>
    <scope>INTERACTION WITH SOC1</scope>
    <scope>SUBCELLULAR LOCATION</scope>
</reference>
<reference key="16">
    <citation type="journal article" date="2008" name="Plant J.">
        <title>AGAMOUS-LIKE24 and SHORT VEGETATIVE PHASE determine floral meristem identity in Arabidopsis.</title>
        <authorList>
            <person name="Gregis V."/>
            <person name="Sessa A."/>
            <person name="Colombo L."/>
            <person name="Kater M.M."/>
        </authorList>
    </citation>
    <scope>FUNCTION</scope>
    <scope>INDUCTION</scope>
</reference>
<reference key="17">
    <citation type="journal article" date="2009" name="Plant J.">
        <title>The Arabidopsis floral meristem identity genes AP1, AGL24 and SVP directly repress class B and C floral homeotic genes.</title>
        <authorList>
            <person name="Gregis V."/>
            <person name="Sessa A."/>
            <person name="Dorca-Fornell C."/>
            <person name="Kater M.M."/>
        </authorList>
    </citation>
    <scope>FUNCTION</scope>
    <scope>SUBCELLULAR LOCATION</scope>
    <scope>TISSUE SPECIFICITY</scope>
    <scope>DEVELOPMENTAL STAGE</scope>
</reference>
<evidence type="ECO:0000255" key="1">
    <source>
        <dbReference type="PROSITE-ProRule" id="PRU00251"/>
    </source>
</evidence>
<evidence type="ECO:0000255" key="2">
    <source>
        <dbReference type="PROSITE-ProRule" id="PRU00629"/>
    </source>
</evidence>
<evidence type="ECO:0000256" key="3">
    <source>
        <dbReference type="SAM" id="MobiDB-lite"/>
    </source>
</evidence>
<evidence type="ECO:0000269" key="4">
    <source>
    </source>
</evidence>
<evidence type="ECO:0000269" key="5">
    <source>
    </source>
</evidence>
<evidence type="ECO:0000269" key="6">
    <source>
    </source>
</evidence>
<evidence type="ECO:0000269" key="7">
    <source>
    </source>
</evidence>
<evidence type="ECO:0000269" key="8">
    <source>
    </source>
</evidence>
<evidence type="ECO:0000269" key="9">
    <source>
    </source>
</evidence>
<evidence type="ECO:0000269" key="10">
    <source>
    </source>
</evidence>
<evidence type="ECO:0000269" key="11">
    <source>
    </source>
</evidence>
<evidence type="ECO:0000269" key="12">
    <source>
    </source>
</evidence>
<evidence type="ECO:0000269" key="13">
    <source>
    </source>
</evidence>
<evidence type="ECO:0000269" key="14">
    <source>
    </source>
</evidence>
<dbReference type="EMBL" id="AF005158">
    <property type="protein sequence ID" value="AAC63139.1"/>
    <property type="molecule type" value="mRNA"/>
</dbReference>
<dbReference type="EMBL" id="AF005159">
    <property type="protein sequence ID" value="AAC63140.1"/>
    <property type="molecule type" value="Genomic_DNA"/>
</dbReference>
<dbReference type="EMBL" id="AL035356">
    <property type="protein sequence ID" value="CAA23009.1"/>
    <property type="molecule type" value="Genomic_DNA"/>
</dbReference>
<dbReference type="EMBL" id="AL161561">
    <property type="protein sequence ID" value="CAB79364.1"/>
    <property type="molecule type" value="Genomic_DNA"/>
</dbReference>
<dbReference type="EMBL" id="CP002687">
    <property type="protein sequence ID" value="AEE84922.1"/>
    <property type="molecule type" value="Genomic_DNA"/>
</dbReference>
<dbReference type="EMBL" id="BT025171">
    <property type="protein sequence ID" value="ABE77409.1"/>
    <property type="molecule type" value="mRNA"/>
</dbReference>
<dbReference type="EMBL" id="AB493697">
    <property type="protein sequence ID" value="BAH30535.1"/>
    <property type="molecule type" value="mRNA"/>
</dbReference>
<dbReference type="PIR" id="T05580">
    <property type="entry name" value="T05580"/>
</dbReference>
<dbReference type="PIR" id="T51827">
    <property type="entry name" value="T51827"/>
</dbReference>
<dbReference type="RefSeq" id="NP_194185.1">
    <property type="nucleotide sequence ID" value="NM_118587.6"/>
</dbReference>
<dbReference type="SMR" id="O82794"/>
<dbReference type="BioGRID" id="13845">
    <property type="interactions" value="19"/>
</dbReference>
<dbReference type="ELM" id="O82794"/>
<dbReference type="FunCoup" id="O82794">
    <property type="interactions" value="26"/>
</dbReference>
<dbReference type="IntAct" id="O82794">
    <property type="interactions" value="15"/>
</dbReference>
<dbReference type="STRING" id="3702.O82794"/>
<dbReference type="PaxDb" id="3702-AT4G24540.1"/>
<dbReference type="EnsemblPlants" id="AT4G24540.1">
    <property type="protein sequence ID" value="AT4G24540.1"/>
    <property type="gene ID" value="AT4G24540"/>
</dbReference>
<dbReference type="GeneID" id="828556"/>
<dbReference type="Gramene" id="AT4G24540.1">
    <property type="protein sequence ID" value="AT4G24540.1"/>
    <property type="gene ID" value="AT4G24540"/>
</dbReference>
<dbReference type="KEGG" id="ath:AT4G24540"/>
<dbReference type="Araport" id="AT4G24540"/>
<dbReference type="TAIR" id="AT4G24540">
    <property type="gene designation" value="AGL24"/>
</dbReference>
<dbReference type="eggNOG" id="KOG0014">
    <property type="taxonomic scope" value="Eukaryota"/>
</dbReference>
<dbReference type="HOGENOM" id="CLU_053053_14_1_1"/>
<dbReference type="InParanoid" id="O82794"/>
<dbReference type="OMA" id="RYSLHAS"/>
<dbReference type="PhylomeDB" id="O82794"/>
<dbReference type="PRO" id="PR:O82794"/>
<dbReference type="Proteomes" id="UP000006548">
    <property type="component" value="Chromosome 4"/>
</dbReference>
<dbReference type="ExpressionAtlas" id="O82794">
    <property type="expression patterns" value="baseline and differential"/>
</dbReference>
<dbReference type="GO" id="GO:0005737">
    <property type="term" value="C:cytoplasm"/>
    <property type="evidence" value="ECO:0000314"/>
    <property type="project" value="UniProtKB"/>
</dbReference>
<dbReference type="GO" id="GO:0005634">
    <property type="term" value="C:nucleus"/>
    <property type="evidence" value="ECO:0000314"/>
    <property type="project" value="UniProtKB"/>
</dbReference>
<dbReference type="GO" id="GO:0003700">
    <property type="term" value="F:DNA-binding transcription factor activity"/>
    <property type="evidence" value="ECO:0000250"/>
    <property type="project" value="TAIR"/>
</dbReference>
<dbReference type="GO" id="GO:0046982">
    <property type="term" value="F:protein heterodimerization activity"/>
    <property type="evidence" value="ECO:0000353"/>
    <property type="project" value="TAIR"/>
</dbReference>
<dbReference type="GO" id="GO:0042803">
    <property type="term" value="F:protein homodimerization activity"/>
    <property type="evidence" value="ECO:0000353"/>
    <property type="project" value="TAIR"/>
</dbReference>
<dbReference type="GO" id="GO:0000977">
    <property type="term" value="F:RNA polymerase II transcription regulatory region sequence-specific DNA binding"/>
    <property type="evidence" value="ECO:0007669"/>
    <property type="project" value="InterPro"/>
</dbReference>
<dbReference type="GO" id="GO:0043565">
    <property type="term" value="F:sequence-specific DNA binding"/>
    <property type="evidence" value="ECO:0000353"/>
    <property type="project" value="TAIR"/>
</dbReference>
<dbReference type="GO" id="GO:0030154">
    <property type="term" value="P:cell differentiation"/>
    <property type="evidence" value="ECO:0007669"/>
    <property type="project" value="UniProtKB-KW"/>
</dbReference>
<dbReference type="GO" id="GO:0048438">
    <property type="term" value="P:floral whorl development"/>
    <property type="evidence" value="ECO:0000316"/>
    <property type="project" value="TAIR"/>
</dbReference>
<dbReference type="GO" id="GO:0010077">
    <property type="term" value="P:maintenance of inflorescence meristem identity"/>
    <property type="evidence" value="ECO:0000315"/>
    <property type="project" value="UniProtKB"/>
</dbReference>
<dbReference type="GO" id="GO:0045893">
    <property type="term" value="P:positive regulation of DNA-templated transcription"/>
    <property type="evidence" value="ECO:0000270"/>
    <property type="project" value="UniProtKB"/>
</dbReference>
<dbReference type="GO" id="GO:0045944">
    <property type="term" value="P:positive regulation of transcription by RNA polymerase II"/>
    <property type="evidence" value="ECO:0007669"/>
    <property type="project" value="InterPro"/>
</dbReference>
<dbReference type="GO" id="GO:0010220">
    <property type="term" value="P:positive regulation of vernalization response"/>
    <property type="evidence" value="ECO:0000270"/>
    <property type="project" value="UniProtKB"/>
</dbReference>
<dbReference type="GO" id="GO:0048510">
    <property type="term" value="P:regulation of timing of transition from vegetative to reproductive phase"/>
    <property type="evidence" value="ECO:0000315"/>
    <property type="project" value="TAIR"/>
</dbReference>
<dbReference type="GO" id="GO:0009739">
    <property type="term" value="P:response to gibberellin"/>
    <property type="evidence" value="ECO:0000270"/>
    <property type="project" value="UniProtKB"/>
</dbReference>
<dbReference type="CDD" id="cd00265">
    <property type="entry name" value="MADS_MEF2_like"/>
    <property type="match status" value="1"/>
</dbReference>
<dbReference type="FunFam" id="3.40.1810.10:FF:000007">
    <property type="entry name" value="Transcription factor, MADS-box"/>
    <property type="match status" value="1"/>
</dbReference>
<dbReference type="Gene3D" id="3.40.1810.10">
    <property type="entry name" value="Transcription factor, MADS-box"/>
    <property type="match status" value="1"/>
</dbReference>
<dbReference type="InterPro" id="IPR050142">
    <property type="entry name" value="MADS-box/MEF2_TF"/>
</dbReference>
<dbReference type="InterPro" id="IPR033896">
    <property type="entry name" value="MEF2-like_N"/>
</dbReference>
<dbReference type="InterPro" id="IPR002487">
    <property type="entry name" value="TF_Kbox"/>
</dbReference>
<dbReference type="InterPro" id="IPR002100">
    <property type="entry name" value="TF_MADSbox"/>
</dbReference>
<dbReference type="InterPro" id="IPR036879">
    <property type="entry name" value="TF_MADSbox_sf"/>
</dbReference>
<dbReference type="PANTHER" id="PTHR48019">
    <property type="entry name" value="SERUM RESPONSE FACTOR HOMOLOG"/>
    <property type="match status" value="1"/>
</dbReference>
<dbReference type="Pfam" id="PF01486">
    <property type="entry name" value="K-box"/>
    <property type="match status" value="1"/>
</dbReference>
<dbReference type="Pfam" id="PF00319">
    <property type="entry name" value="SRF-TF"/>
    <property type="match status" value="1"/>
</dbReference>
<dbReference type="PRINTS" id="PR00404">
    <property type="entry name" value="MADSDOMAIN"/>
</dbReference>
<dbReference type="SMART" id="SM00432">
    <property type="entry name" value="MADS"/>
    <property type="match status" value="1"/>
</dbReference>
<dbReference type="SUPFAM" id="SSF55455">
    <property type="entry name" value="SRF-like"/>
    <property type="match status" value="1"/>
</dbReference>
<dbReference type="PROSITE" id="PS51297">
    <property type="entry name" value="K_BOX"/>
    <property type="match status" value="1"/>
</dbReference>
<dbReference type="PROSITE" id="PS00350">
    <property type="entry name" value="MADS_BOX_1"/>
    <property type="match status" value="1"/>
</dbReference>
<dbReference type="PROSITE" id="PS50066">
    <property type="entry name" value="MADS_BOX_2"/>
    <property type="match status" value="1"/>
</dbReference>
<proteinExistence type="evidence at protein level"/>
<feature type="chain" id="PRO_0000392926" description="MADS-box protein AGL24">
    <location>
        <begin position="1"/>
        <end position="220"/>
    </location>
</feature>
<feature type="domain" description="MADS-box" evidence="1">
    <location>
        <begin position="1"/>
        <end position="61"/>
    </location>
</feature>
<feature type="domain" description="K-box" evidence="2">
    <location>
        <begin position="87"/>
        <end position="177"/>
    </location>
</feature>
<feature type="region of interest" description="Disordered" evidence="3">
    <location>
        <begin position="190"/>
        <end position="220"/>
    </location>
</feature>
<feature type="compositionally biased region" description="Polar residues" evidence="3">
    <location>
        <begin position="190"/>
        <end position="200"/>
    </location>
</feature>
<name>AGL24_ARATH</name>
<comment type="function">
    <text evidence="4 5 6 7 9 11 12 13 14">Transcription activator that mediates floral transition in response to vernalization. Promotes inflorescence fate in apical meristems. Acts in a dosage-dependent manner. Probably involved in the transduction of RLK-mediated signaling (e.g. IMK3 pathway). Together with AP1 and SVP, controls the identity of the floral meristem and regulates expression of class B, C and E genes. When associated with SOC1, mediates effect of gibberellins on flowering under short-day conditions, and regulates the expression of LEAFY (LFY), which links floral induction and floral development. Confers inflorescence characteristics to floral primordia and early flowering.</text>
</comment>
<comment type="subunit">
    <text evidence="6 8 9 12">Interacts with IMK3/MRLK. Forms a homodimer and heterodimer with SOC1, AP1 and SVP through MADS-box domain. Interacts with the SEU-LUG corepressor complex when complexed to AP1. Interacts with AGL15 and AGL16.</text>
</comment>
<comment type="interaction">
    <interactant intactId="EBI-592083">
        <id>O82794</id>
    </interactant>
    <interactant intactId="EBI-622067">
        <id>Q38838</id>
        <label>AGL14</label>
    </interactant>
    <organismsDiffer>false</organismsDiffer>
    <experiments>6</experiments>
</comment>
<comment type="interaction">
    <interactant intactId="EBI-592083">
        <id>O82794</id>
    </interactant>
    <interactant intactId="EBI-621986">
        <id>Q9SZJ6</id>
        <label>AGL21</label>
    </interactant>
    <organismsDiffer>false</organismsDiffer>
    <experiments>4</experiments>
</comment>
<comment type="interaction">
    <interactant intactId="EBI-592083">
        <id>O82794</id>
    </interactant>
    <interactant intactId="EBI-621912">
        <id>Q38876</id>
        <label>AGL8</label>
    </interactant>
    <organismsDiffer>false</organismsDiffer>
    <experiments>3</experiments>
</comment>
<comment type="interaction">
    <interactant intactId="EBI-592083">
        <id>O82794</id>
    </interactant>
    <interactant intactId="EBI-592003">
        <id>P35631</id>
        <label>AP1</label>
    </interactant>
    <organismsDiffer>false</organismsDiffer>
    <experiments>4</experiments>
</comment>
<comment type="interaction">
    <interactant intactId="EBI-592083">
        <id>O82794</id>
    </interactant>
    <interactant intactId="EBI-2618990">
        <id>Q9SL42</id>
        <label>PIN1</label>
    </interactant>
    <organismsDiffer>false</organismsDiffer>
    <experiments>4</experiments>
</comment>
<comment type="interaction">
    <interactant intactId="EBI-592083">
        <id>O82794</id>
    </interactant>
    <interactant intactId="EBI-632935">
        <id>P29382</id>
        <label>SEP1</label>
    </interactant>
    <organismsDiffer>false</organismsDiffer>
    <experiments>3</experiments>
</comment>
<comment type="subcellular location">
    <subcellularLocation>
        <location>Nucleus</location>
    </subcellularLocation>
    <subcellularLocation>
        <location>Cytoplasm</location>
    </subcellularLocation>
    <text>Translocation from the cytoplasm to the nucleus in the presence of IMK3.</text>
</comment>
<comment type="tissue specificity">
    <text evidence="4 5 6 14">Mostly expressed in shoot apical meristems, including floral meristems. Also detected in stems, seedlings, leaves, flowers and siliques, and, to a lower extent, in roots.</text>
</comment>
<comment type="developmental stage">
    <text evidence="4 7 14">During vegetative phase, expressed in the entire shoot apical meristem and in emerging leaf primordia. During floral transition, gradually detectable in the transitional shoot apex and young cauline leaves. Detected in the inflorescence meristem. Present throughout the tunica (superficial layers) of the floral meristem during early stages of flower development. Later disappears prior to emergence of sepal primordia. At later stages of floral development, weakly expressed in the distal parts of stamens and carpels. Then restricted to pollen and the adaxial surface of the gynoecium.</text>
</comment>
<comment type="induction">
    <text evidence="5 7 10 11 13">Induced by vernalization in a FLC-independent manner. Repressed by the floral homeotic genes AP1, LFY and SEP3 in emerging floral meristems to establish a floral identity and prevent inflorescence fate. Up-regulated at the shoot apex by SOC1.</text>
</comment>
<comment type="PTM">
    <text evidence="6">Phosphorylated by IMK3. Induced by vernalization.</text>
</comment>
<comment type="disruption phenotype">
    <text evidence="4">Delayed flowering.</text>
</comment>
<protein>
    <recommendedName>
        <fullName>MADS-box protein AGL24</fullName>
    </recommendedName>
    <alternativeName>
        <fullName>Protein AGAMOUS-LIKE 24</fullName>
    </alternativeName>
</protein>
<organism>
    <name type="scientific">Arabidopsis thaliana</name>
    <name type="common">Mouse-ear cress</name>
    <dbReference type="NCBI Taxonomy" id="3702"/>
    <lineage>
        <taxon>Eukaryota</taxon>
        <taxon>Viridiplantae</taxon>
        <taxon>Streptophyta</taxon>
        <taxon>Embryophyta</taxon>
        <taxon>Tracheophyta</taxon>
        <taxon>Spermatophyta</taxon>
        <taxon>Magnoliopsida</taxon>
        <taxon>eudicotyledons</taxon>
        <taxon>Gunneridae</taxon>
        <taxon>Pentapetalae</taxon>
        <taxon>rosids</taxon>
        <taxon>malvids</taxon>
        <taxon>Brassicales</taxon>
        <taxon>Brassicaceae</taxon>
        <taxon>Camelineae</taxon>
        <taxon>Arabidopsis</taxon>
    </lineage>
</organism>
<keyword id="KW-0010">Activator</keyword>
<keyword id="KW-0963">Cytoplasm</keyword>
<keyword id="KW-0217">Developmental protein</keyword>
<keyword id="KW-0221">Differentiation</keyword>
<keyword id="KW-0238">DNA-binding</keyword>
<keyword id="KW-0287">Flowering</keyword>
<keyword id="KW-0539">Nucleus</keyword>
<keyword id="KW-0597">Phosphoprotein</keyword>
<keyword id="KW-1185">Reference proteome</keyword>
<keyword id="KW-0804">Transcription</keyword>
<keyword id="KW-0805">Transcription regulation</keyword>
<gene>
    <name type="primary">AGL24</name>
    <name type="ordered locus">At4g24540</name>
    <name type="ORF">F22K18.260</name>
</gene>